<evidence type="ECO:0000255" key="1">
    <source>
        <dbReference type="HAMAP-Rule" id="MF_00675"/>
    </source>
</evidence>
<keyword id="KW-0413">Isomerase</keyword>
<keyword id="KW-1185">Reference proteome</keyword>
<feature type="chain" id="PRO_0000172759" description="Uronate isomerase">
    <location>
        <begin position="1"/>
        <end position="473"/>
    </location>
</feature>
<sequence>MKPFLNDDFLLTNETSKVLYHQYAKGMPIIDYHCHLSPKEIYENKTFKNLTEVWLYGDHYKWRAMRANGISEEFITGDASDEEKFSAWARTVPMTIGNPLYHWTHLELRRFFGIDDRLDEKSAPHIWERVNEQLAGGGFGARDLIEKSNVETVVTTDDPTDSLEYHVKLKDEDFNVSVLPGFRPDKAMEINQEGFAAWVRKLETASGMKIANYDDFLKALKNRIDFFHEAGGRISDHAINQMMYTETDESEVRPIFAKVMNGESASPEEECKFKSLTLHFLGTCYAEKGWAMQLHINALRNNSSKMYRKLGPDTGYDAINDQDIAKPLCSFLDSLDRKDALPKTILYSLNPRDNVVISSLCGSFQDGRIPGKIQHGTAWWFNDTKDGMLEQMKSLANIGLLSRFIGMLTDSRSFLSYTRHEYFRRLLCDVIGTWVENGEAPDDIELLGRIVKGICYENAKHYFQFEVKDRLKA</sequence>
<organism>
    <name type="scientific">Bacillus licheniformis (strain ATCC 14580 / DSM 13 / JCM 2505 / CCUG 7422 / NBRC 12200 / NCIMB 9375 / NCTC 10341 / NRRL NRS-1264 / Gibson 46)</name>
    <dbReference type="NCBI Taxonomy" id="279010"/>
    <lineage>
        <taxon>Bacteria</taxon>
        <taxon>Bacillati</taxon>
        <taxon>Bacillota</taxon>
        <taxon>Bacilli</taxon>
        <taxon>Bacillales</taxon>
        <taxon>Bacillaceae</taxon>
        <taxon>Bacillus</taxon>
    </lineage>
</organism>
<gene>
    <name evidence="1" type="primary">uxaC</name>
    <name type="ordered locus">BLi03516</name>
    <name type="ordered locus">BL00708</name>
</gene>
<accession>Q65F21</accession>
<accession>Q62QI7</accession>
<comment type="catalytic activity">
    <reaction evidence="1">
        <text>D-glucuronate = D-fructuronate</text>
        <dbReference type="Rhea" id="RHEA:13049"/>
        <dbReference type="ChEBI" id="CHEBI:58720"/>
        <dbReference type="ChEBI" id="CHEBI:59863"/>
        <dbReference type="EC" id="5.3.1.12"/>
    </reaction>
</comment>
<comment type="catalytic activity">
    <reaction evidence="1">
        <text>aldehydo-D-galacturonate = keto-D-tagaturonate</text>
        <dbReference type="Rhea" id="RHEA:27702"/>
        <dbReference type="ChEBI" id="CHEBI:12952"/>
        <dbReference type="ChEBI" id="CHEBI:17886"/>
        <dbReference type="EC" id="5.3.1.12"/>
    </reaction>
</comment>
<comment type="pathway">
    <text evidence="1">Carbohydrate metabolism; pentose and glucuronate interconversion.</text>
</comment>
<comment type="similarity">
    <text evidence="1">Belongs to the metallo-dependent hydrolases superfamily. Uronate isomerase family.</text>
</comment>
<name>UXAC_BACLD</name>
<dbReference type="EC" id="5.3.1.12" evidence="1"/>
<dbReference type="EMBL" id="AE017333">
    <property type="protein sequence ID" value="AAU42343.1"/>
    <property type="molecule type" value="Genomic_DNA"/>
</dbReference>
<dbReference type="EMBL" id="CP000002">
    <property type="protein sequence ID" value="AAU24973.1"/>
    <property type="molecule type" value="Genomic_DNA"/>
</dbReference>
<dbReference type="RefSeq" id="WP_009329570.1">
    <property type="nucleotide sequence ID" value="NC_006322.1"/>
</dbReference>
<dbReference type="SMR" id="Q65F21"/>
<dbReference type="STRING" id="279010.BL00708"/>
<dbReference type="GeneID" id="92859906"/>
<dbReference type="KEGG" id="bld:BLi03516"/>
<dbReference type="KEGG" id="bli:BL00708"/>
<dbReference type="eggNOG" id="COG1904">
    <property type="taxonomic scope" value="Bacteria"/>
</dbReference>
<dbReference type="HOGENOM" id="CLU_044465_1_0_9"/>
<dbReference type="UniPathway" id="UPA00246"/>
<dbReference type="Proteomes" id="UP000000606">
    <property type="component" value="Chromosome"/>
</dbReference>
<dbReference type="GO" id="GO:0008880">
    <property type="term" value="F:glucuronate isomerase activity"/>
    <property type="evidence" value="ECO:0007669"/>
    <property type="project" value="UniProtKB-UniRule"/>
</dbReference>
<dbReference type="GO" id="GO:0019698">
    <property type="term" value="P:D-galacturonate catabolic process"/>
    <property type="evidence" value="ECO:0007669"/>
    <property type="project" value="TreeGrafter"/>
</dbReference>
<dbReference type="GO" id="GO:0042840">
    <property type="term" value="P:D-glucuronate catabolic process"/>
    <property type="evidence" value="ECO:0007669"/>
    <property type="project" value="TreeGrafter"/>
</dbReference>
<dbReference type="Gene3D" id="3.20.20.140">
    <property type="entry name" value="Metal-dependent hydrolases"/>
    <property type="match status" value="1"/>
</dbReference>
<dbReference type="Gene3D" id="1.10.2020.10">
    <property type="entry name" value="uronate isomerase, domain 2, chain A"/>
    <property type="match status" value="1"/>
</dbReference>
<dbReference type="HAMAP" id="MF_00675">
    <property type="entry name" value="UxaC"/>
    <property type="match status" value="1"/>
</dbReference>
<dbReference type="InterPro" id="IPR032466">
    <property type="entry name" value="Metal_Hydrolase"/>
</dbReference>
<dbReference type="InterPro" id="IPR003766">
    <property type="entry name" value="Uronate_isomerase"/>
</dbReference>
<dbReference type="NCBIfam" id="NF002794">
    <property type="entry name" value="PRK02925.1"/>
    <property type="match status" value="1"/>
</dbReference>
<dbReference type="PANTHER" id="PTHR30068">
    <property type="entry name" value="URONATE ISOMERASE"/>
    <property type="match status" value="1"/>
</dbReference>
<dbReference type="PANTHER" id="PTHR30068:SF4">
    <property type="entry name" value="URONATE ISOMERASE"/>
    <property type="match status" value="1"/>
</dbReference>
<dbReference type="Pfam" id="PF02614">
    <property type="entry name" value="UxaC"/>
    <property type="match status" value="1"/>
</dbReference>
<dbReference type="SUPFAM" id="SSF51556">
    <property type="entry name" value="Metallo-dependent hydrolases"/>
    <property type="match status" value="1"/>
</dbReference>
<proteinExistence type="inferred from homology"/>
<protein>
    <recommendedName>
        <fullName evidence="1">Uronate isomerase</fullName>
        <ecNumber evidence="1">5.3.1.12</ecNumber>
    </recommendedName>
    <alternativeName>
        <fullName evidence="1">Glucuronate isomerase</fullName>
    </alternativeName>
    <alternativeName>
        <fullName evidence="1">Uronic isomerase</fullName>
    </alternativeName>
</protein>
<reference key="1">
    <citation type="journal article" date="2004" name="J. Mol. Microbiol. Biotechnol.">
        <title>The complete genome sequence of Bacillus licheniformis DSM13, an organism with great industrial potential.</title>
        <authorList>
            <person name="Veith B."/>
            <person name="Herzberg C."/>
            <person name="Steckel S."/>
            <person name="Feesche J."/>
            <person name="Maurer K.H."/>
            <person name="Ehrenreich P."/>
            <person name="Baeumer S."/>
            <person name="Henne A."/>
            <person name="Liesegang H."/>
            <person name="Merkl R."/>
            <person name="Ehrenreich A."/>
            <person name="Gottschalk G."/>
        </authorList>
    </citation>
    <scope>NUCLEOTIDE SEQUENCE [LARGE SCALE GENOMIC DNA]</scope>
    <source>
        <strain>ATCC 14580 / DSM 13 / JCM 2505 / CCUG 7422 / NBRC 12200 / NCIMB 9375 / NCTC 10341 / NRRL NRS-1264 / Gibson 46</strain>
    </source>
</reference>
<reference key="2">
    <citation type="journal article" date="2004" name="Genome Biol.">
        <title>Complete genome sequence of the industrial bacterium Bacillus licheniformis and comparisons with closely related Bacillus species.</title>
        <authorList>
            <person name="Rey M.W."/>
            <person name="Ramaiya P."/>
            <person name="Nelson B.A."/>
            <person name="Brody-Karpin S.D."/>
            <person name="Zaretsky E.J."/>
            <person name="Tang M."/>
            <person name="Lopez de Leon A."/>
            <person name="Xiang H."/>
            <person name="Gusti V."/>
            <person name="Clausen I.G."/>
            <person name="Olsen P.B."/>
            <person name="Rasmussen M.D."/>
            <person name="Andersen J.T."/>
            <person name="Joergensen P.L."/>
            <person name="Larsen T.S."/>
            <person name="Sorokin A."/>
            <person name="Bolotin A."/>
            <person name="Lapidus A."/>
            <person name="Galleron N."/>
            <person name="Ehrlich S.D."/>
            <person name="Berka R.M."/>
        </authorList>
    </citation>
    <scope>NUCLEOTIDE SEQUENCE [LARGE SCALE GENOMIC DNA]</scope>
    <source>
        <strain>ATCC 14580 / DSM 13 / JCM 2505 / CCUG 7422 / NBRC 12200 / NCIMB 9375 / NCTC 10341 / NRRL NRS-1264 / Gibson 46</strain>
    </source>
</reference>